<feature type="chain" id="PRO_0000429325" description="Single-stranded DNA binding protein Ssb">
    <location>
        <begin position="1"/>
        <end position="148"/>
    </location>
</feature>
<feature type="DNA-binding region" description="OB">
    <location>
        <begin position="19"/>
        <end position="88"/>
    </location>
</feature>
<feature type="region of interest" description="Disordered" evidence="1">
    <location>
        <begin position="90"/>
        <end position="148"/>
    </location>
</feature>
<feature type="compositionally biased region" description="Polar residues" evidence="1">
    <location>
        <begin position="103"/>
        <end position="116"/>
    </location>
</feature>
<feature type="compositionally biased region" description="Basic residues" evidence="1">
    <location>
        <begin position="128"/>
        <end position="137"/>
    </location>
</feature>
<feature type="mutagenesis site" description="Slight decrease in ssDNA binding." evidence="3">
    <original>I</original>
    <variation>A</variation>
    <location>
        <position position="30"/>
    </location>
</feature>
<feature type="mutagenesis site" description="Significantly weaker ssDNA binding." evidence="3">
    <original>W</original>
    <variation>A</variation>
    <location>
        <position position="56"/>
    </location>
</feature>
<feature type="mutagenesis site" description="Slight decrease in ssDNA binding." evidence="3">
    <original>W</original>
    <variation>A</variation>
    <location>
        <position position="75"/>
    </location>
</feature>
<feature type="mutagenesis site" description="Significantly weaker ssDNA binding." evidence="3">
    <original>F</original>
    <variation>A</variation>
    <location>
        <position position="79"/>
    </location>
</feature>
<feature type="helix" evidence="7">
    <location>
        <begin position="5"/>
        <end position="7"/>
    </location>
</feature>
<feature type="strand" evidence="7">
    <location>
        <begin position="13"/>
        <end position="24"/>
    </location>
</feature>
<feature type="strand" evidence="7">
    <location>
        <begin position="28"/>
        <end position="30"/>
    </location>
</feature>
<feature type="strand" evidence="7">
    <location>
        <begin position="37"/>
        <end position="46"/>
    </location>
</feature>
<feature type="strand" evidence="7">
    <location>
        <begin position="49"/>
        <end position="56"/>
    </location>
</feature>
<feature type="helix" evidence="7">
    <location>
        <begin position="57"/>
        <end position="59"/>
    </location>
</feature>
<feature type="turn" evidence="8">
    <location>
        <begin position="60"/>
        <end position="62"/>
    </location>
</feature>
<feature type="strand" evidence="7">
    <location>
        <begin position="68"/>
        <end position="79"/>
    </location>
</feature>
<feature type="strand" evidence="7">
    <location>
        <begin position="82"/>
        <end position="87"/>
    </location>
</feature>
<feature type="strand" evidence="7">
    <location>
        <begin position="92"/>
        <end position="95"/>
    </location>
</feature>
<feature type="strand" evidence="9">
    <location>
        <begin position="99"/>
        <end position="102"/>
    </location>
</feature>
<feature type="helix" evidence="7">
    <location>
        <begin position="104"/>
        <end position="106"/>
    </location>
</feature>
<accession>Q97W73</accession>
<protein>
    <recommendedName>
        <fullName>Single-stranded DNA binding protein Ssb</fullName>
        <shortName>SSB</shortName>
    </recommendedName>
</protein>
<evidence type="ECO:0000256" key="1">
    <source>
        <dbReference type="SAM" id="MobiDB-lite"/>
    </source>
</evidence>
<evidence type="ECO:0000269" key="2">
    <source>
    </source>
</evidence>
<evidence type="ECO:0000269" key="3">
    <source>
    </source>
</evidence>
<evidence type="ECO:0000269" key="4">
    <source>
    </source>
</evidence>
<evidence type="ECO:0000269" key="5">
    <source>
    </source>
</evidence>
<evidence type="ECO:0000305" key="6">
    <source>
    </source>
</evidence>
<evidence type="ECO:0007829" key="7">
    <source>
        <dbReference type="PDB" id="1O7I"/>
    </source>
</evidence>
<evidence type="ECO:0007829" key="8">
    <source>
        <dbReference type="PDB" id="2MNA"/>
    </source>
</evidence>
<evidence type="ECO:0007829" key="9">
    <source>
        <dbReference type="PDB" id="7WCG"/>
    </source>
</evidence>
<reference key="1">
    <citation type="journal article" date="2001" name="Proc. Natl. Acad. Sci. U.S.A.">
        <title>The complete genome of the crenarchaeon Sulfolobus solfataricus P2.</title>
        <authorList>
            <person name="She Q."/>
            <person name="Singh R.K."/>
            <person name="Confalonieri F."/>
            <person name="Zivanovic Y."/>
            <person name="Allard G."/>
            <person name="Awayez M.J."/>
            <person name="Chan-Weiher C.C.-Y."/>
            <person name="Clausen I.G."/>
            <person name="Curtis B.A."/>
            <person name="De Moors A."/>
            <person name="Erauso G."/>
            <person name="Fletcher C."/>
            <person name="Gordon P.M.K."/>
            <person name="Heikamp-de Jong I."/>
            <person name="Jeffries A.C."/>
            <person name="Kozera C.J."/>
            <person name="Medina N."/>
            <person name="Peng X."/>
            <person name="Thi-Ngoc H.P."/>
            <person name="Redder P."/>
            <person name="Schenk M.E."/>
            <person name="Theriault C."/>
            <person name="Tolstrup N."/>
            <person name="Charlebois R.L."/>
            <person name="Doolittle W.F."/>
            <person name="Duguet M."/>
            <person name="Gaasterland T."/>
            <person name="Garrett R.A."/>
            <person name="Ragan M.A."/>
            <person name="Sensen C.W."/>
            <person name="Van der Oost J."/>
        </authorList>
    </citation>
    <scope>NUCLEOTIDE SEQUENCE [LARGE SCALE GENOMIC DNA]</scope>
    <source>
        <strain>ATCC 35092 / DSM 1617 / JCM 11322 / P2</strain>
    </source>
</reference>
<reference key="2">
    <citation type="journal article" date="2003" name="Mol. Microbiol.">
        <title>An archaeal XPF repair endonuclease dependent on a heterotrimeric PCNA.</title>
        <authorList>
            <person name="Roberts J.A."/>
            <person name="Bell S.D."/>
            <person name="White M.F."/>
        </authorList>
    </citation>
    <scope>FUNCTION</scope>
    <source>
        <strain>ATCC 35092 / DSM 1617 / JCM 11322 / P2</strain>
    </source>
</reference>
<reference key="3">
    <citation type="journal article" date="2004" name="J. Biol. Chem.">
        <title>Reverse gyrase recruitment to DNA after UV light irradiation in Sulfolobus solfataricus.</title>
        <authorList>
            <person name="Napoli A."/>
            <person name="Valenti A."/>
            <person name="Salerno V."/>
            <person name="Nadal M."/>
            <person name="Garnier F."/>
            <person name="Rossi M."/>
            <person name="Ciaramella M."/>
        </authorList>
    </citation>
    <scope>SUBCELLULAR LOCATION</scope>
    <source>
        <strain>ATCC 35092 / DSM 1617 / JCM 11322 / P2</strain>
    </source>
</reference>
<reference key="4">
    <citation type="journal article" date="2005" name="Nucleic Acids Res.">
        <title>Functional interaction of reverse gyrase with single-strand binding protein of the archaeon Sulfolobus.</title>
        <authorList>
            <person name="Napoli A."/>
            <person name="Valenti A."/>
            <person name="Salerno V."/>
            <person name="Nadal M."/>
            <person name="Garnier F."/>
            <person name="Rossi M."/>
            <person name="Ciaramella M."/>
        </authorList>
    </citation>
    <scope>FUNCTION</scope>
    <scope>DNA-BINDING</scope>
    <source>
        <strain>ATCC 35092 / DSM 1617 / JCM 11322 / P2</strain>
    </source>
</reference>
<reference key="5">
    <citation type="journal article" date="2003" name="EMBO J.">
        <title>Insights into ssDNA recognition by the OB fold from a structural and thermodynamic study of Sulfolobus SSB protein.</title>
        <authorList>
            <person name="Kerr I.D."/>
            <person name="Wadsworth R.I."/>
            <person name="Cubeddu L."/>
            <person name="Blankenfeldt W."/>
            <person name="Naismith J.H."/>
            <person name="White M.F."/>
        </authorList>
    </citation>
    <scope>X-RAY CRYSTALLOGRAPHY (1.20 ANGSTROMS) OF 1-119</scope>
    <scope>SUBUNIT</scope>
    <scope>DNA-BINDING</scope>
    <scope>MUTAGENESIS OF ILE-30; TRP-56; TRP-75 AND PHE-79</scope>
</reference>
<organism>
    <name type="scientific">Saccharolobus solfataricus (strain ATCC 35092 / DSM 1617 / JCM 11322 / P2)</name>
    <name type="common">Sulfolobus solfataricus</name>
    <dbReference type="NCBI Taxonomy" id="273057"/>
    <lineage>
        <taxon>Archaea</taxon>
        <taxon>Thermoproteota</taxon>
        <taxon>Thermoprotei</taxon>
        <taxon>Sulfolobales</taxon>
        <taxon>Sulfolobaceae</taxon>
        <taxon>Saccharolobus</taxon>
    </lineage>
</organism>
<sequence length="148" mass="16138">MEEKVGNLKPNMESVNVTVRVLEASEARQIQTKNGVRTISEAIVGDETGRVKLTLWGKHAGSIKEGQVVKIENAWTTAFKGQVQLNAGSKTKIAEASEDGFPESSQIPENTPTAPQQMRGGGRGFRGGGRRYGRRGGRRQENEEGEEE</sequence>
<proteinExistence type="evidence at protein level"/>
<keyword id="KW-0002">3D-structure</keyword>
<keyword id="KW-0158">Chromosome</keyword>
<keyword id="KW-0963">Cytoplasm</keyword>
<keyword id="KW-0238">DNA-binding</keyword>
<keyword id="KW-1185">Reference proteome</keyword>
<comment type="function">
    <text evidence="2 5">Binds to ssDNA, binds approximately 5 nucleotides per monomer, binding may be slightly cooperative (PubMed:12675797). Inhibits the endonuclease activity of XPF (PubMed:12675797). Stimulates reverse gyrase from S.shibatae strain B12 (rgy) (PubMed:15673717).</text>
</comment>
<comment type="subunit">
    <text evidence="6">Monomer in solution, may bind ssDNA as an array of monomers.</text>
</comment>
<comment type="subcellular location">
    <subcellularLocation>
        <location evidence="4">Cytoplasm</location>
    </subcellularLocation>
    <subcellularLocation>
        <location evidence="4">Chromosome</location>
    </subcellularLocation>
    <text evidence="4">About half the protein is soluble and half is probably DNA-associated; distribution does not change upon UV irradiation.</text>
</comment>
<dbReference type="EMBL" id="AE006641">
    <property type="protein sequence ID" value="AAK42515.1"/>
    <property type="molecule type" value="Genomic_DNA"/>
</dbReference>
<dbReference type="PIR" id="D90407">
    <property type="entry name" value="D90407"/>
</dbReference>
<dbReference type="RefSeq" id="WP_009989484.1">
    <property type="nucleotide sequence ID" value="NC_002754.1"/>
</dbReference>
<dbReference type="PDB" id="1O7I">
    <property type="method" value="X-ray"/>
    <property type="resolution" value="1.20 A"/>
    <property type="chains" value="A/B=1-119"/>
</dbReference>
<dbReference type="PDB" id="2MNA">
    <property type="method" value="NMR"/>
    <property type="chains" value="A=1-114"/>
</dbReference>
<dbReference type="PDB" id="7WCG">
    <property type="method" value="NMR"/>
    <property type="chains" value="A=1-114"/>
</dbReference>
<dbReference type="PDBsum" id="1O7I"/>
<dbReference type="PDBsum" id="2MNA"/>
<dbReference type="PDBsum" id="7WCG"/>
<dbReference type="BMRB" id="Q97W73"/>
<dbReference type="SMR" id="Q97W73"/>
<dbReference type="FunCoup" id="Q97W73">
    <property type="interactions" value="56"/>
</dbReference>
<dbReference type="STRING" id="273057.SSO2364"/>
<dbReference type="PaxDb" id="273057-SSO2364"/>
<dbReference type="EnsemblBacteria" id="AAK42515">
    <property type="protein sequence ID" value="AAK42515"/>
    <property type="gene ID" value="SSO2364"/>
</dbReference>
<dbReference type="GeneID" id="44128089"/>
<dbReference type="KEGG" id="sso:SSO2364"/>
<dbReference type="PATRIC" id="fig|273057.12.peg.2449"/>
<dbReference type="eggNOG" id="arCOG01510">
    <property type="taxonomic scope" value="Archaea"/>
</dbReference>
<dbReference type="HOGENOM" id="CLU_110881_2_0_2"/>
<dbReference type="InParanoid" id="Q97W73"/>
<dbReference type="PhylomeDB" id="Q97W73"/>
<dbReference type="EvolutionaryTrace" id="Q97W73"/>
<dbReference type="Proteomes" id="UP000001974">
    <property type="component" value="Chromosome"/>
</dbReference>
<dbReference type="GO" id="GO:0005694">
    <property type="term" value="C:chromosome"/>
    <property type="evidence" value="ECO:0007669"/>
    <property type="project" value="UniProtKB-SubCell"/>
</dbReference>
<dbReference type="GO" id="GO:0005737">
    <property type="term" value="C:cytoplasm"/>
    <property type="evidence" value="ECO:0007669"/>
    <property type="project" value="UniProtKB-SubCell"/>
</dbReference>
<dbReference type="GO" id="GO:0003677">
    <property type="term" value="F:DNA binding"/>
    <property type="evidence" value="ECO:0000318"/>
    <property type="project" value="GO_Central"/>
</dbReference>
<dbReference type="GO" id="GO:0000724">
    <property type="term" value="P:double-strand break repair via homologous recombination"/>
    <property type="evidence" value="ECO:0000318"/>
    <property type="project" value="GO_Central"/>
</dbReference>
<dbReference type="GO" id="GO:0010212">
    <property type="term" value="P:response to ionizing radiation"/>
    <property type="evidence" value="ECO:0000318"/>
    <property type="project" value="GO_Central"/>
</dbReference>
<dbReference type="CDD" id="cd04491">
    <property type="entry name" value="SoSSB_OBF"/>
    <property type="match status" value="1"/>
</dbReference>
<dbReference type="FunFam" id="2.40.50.140:FF:000588">
    <property type="entry name" value="Single-stranded DNA binding protein Ssb"/>
    <property type="match status" value="1"/>
</dbReference>
<dbReference type="Gene3D" id="2.40.50.140">
    <property type="entry name" value="Nucleic acid-binding proteins"/>
    <property type="match status" value="1"/>
</dbReference>
<dbReference type="InterPro" id="IPR012340">
    <property type="entry name" value="NA-bd_OB-fold"/>
</dbReference>
<dbReference type="InterPro" id="IPR051231">
    <property type="entry name" value="SOSS-B"/>
</dbReference>
<dbReference type="InterPro" id="IPR048970">
    <property type="entry name" value="Ssb-like_OB"/>
</dbReference>
<dbReference type="NCBIfam" id="NF005048">
    <property type="entry name" value="PRK06461.1-1"/>
    <property type="match status" value="1"/>
</dbReference>
<dbReference type="PANTHER" id="PTHR13356">
    <property type="entry name" value="OB FOLD NUCLEIC ACID BINDING PROTEIN-RELATED"/>
    <property type="match status" value="1"/>
</dbReference>
<dbReference type="PANTHER" id="PTHR13356:SF0">
    <property type="entry name" value="SOSS COMPLEX SUBUNIT B HOMOLOG"/>
    <property type="match status" value="1"/>
</dbReference>
<dbReference type="Pfam" id="PF21473">
    <property type="entry name" value="Ssb-like_OB"/>
    <property type="match status" value="1"/>
</dbReference>
<dbReference type="SUPFAM" id="SSF50249">
    <property type="entry name" value="Nucleic acid-binding proteins"/>
    <property type="match status" value="1"/>
</dbReference>
<name>SSB_SACS2</name>
<gene>
    <name type="primary">ssb</name>
    <name type="ordered locus">SSO2364</name>
</gene>